<accession>P00905</accession>
<name>TRPGD_SALTY</name>
<keyword id="KW-0002">3D-structure</keyword>
<keyword id="KW-0021">Allosteric enzyme</keyword>
<keyword id="KW-0028">Amino-acid biosynthesis</keyword>
<keyword id="KW-0057">Aromatic amino acid biosynthesis</keyword>
<keyword id="KW-0315">Glutamine amidotransferase</keyword>
<keyword id="KW-0328">Glycosyltransferase</keyword>
<keyword id="KW-0456">Lyase</keyword>
<keyword id="KW-0511">Multifunctional enzyme</keyword>
<keyword id="KW-1185">Reference proteome</keyword>
<keyword id="KW-0808">Transferase</keyword>
<keyword id="KW-0822">Tryptophan biosynthesis</keyword>
<sequence>MADILLLDNIDSFTWNLADQLRTNGHNVVIYRNHIPAQTLIDRLATMKNPVLMLSPGPGVPSEAGCMPELLTRLRGKLPIIGICLGHQAIVEAYGGYVGQAGEILHGKASSIEHDGQAMFAGLANPLPVARYHSLVGSNVPAGLTINAHFNGMVMAVRHDADRVCGFQFHPESILTTQGARLLEQTLAWAQQKLEPTNTLQPILEKLYQAQTLTQQESHQLFSAVVRGELKPEQLAAALVSMKIRGEHPNEIAGAATALLENAAPFPRPEYLFADIVGTGGDGSNSINISTASAFVAAACGLKVAKHGNRSVSSKSGSSDLLAAFGINLDMNADKSRQALDELGVCFLFAPKYHTGLRHAMPVRQQLKTRTLFNVLGPLINPAHPPLALIGVYSPELVLPIAETLRVLGYQRAAVVHSGGMDEVSLHAPTIVAELHDGEIKSYQLTAEDFGLTPYHQDQLAGGTPEENRDILTRLLQGKGDAAHEAAVAANVAMLMRLHGQEDLKANAQTVLDVLRNGTAYDRVTALAARG</sequence>
<proteinExistence type="evidence at protein level"/>
<evidence type="ECO:0000250" key="1"/>
<evidence type="ECO:0000250" key="2">
    <source>
        <dbReference type="UniProtKB" id="P00900"/>
    </source>
</evidence>
<evidence type="ECO:0000269" key="3">
    <source>
    </source>
</evidence>
<evidence type="ECO:0000269" key="4">
    <source>
    </source>
</evidence>
<evidence type="ECO:0000305" key="5"/>
<evidence type="ECO:0000305" key="6">
    <source>
    </source>
</evidence>
<evidence type="ECO:0000305" key="7">
    <source>
    </source>
</evidence>
<evidence type="ECO:0000305" key="8">
    <source>
    </source>
</evidence>
<evidence type="ECO:0007829" key="9">
    <source>
        <dbReference type="PDB" id="1I1Q"/>
    </source>
</evidence>
<comment type="function">
    <text evidence="4">Part of a heterotetrameric complex that catalyzes the two-step biosynthesis of anthranilate, an intermediate in the biosynthesis of L-tryptophan. In the first step, the glutamine-binding beta subunit (TrpG) of anthranilate synthase (AS) provides the glutamine amidotransferase activity which generates ammonia as a substrate that, along with chorismate, is used in the second step, catalyzed by the large alpha subunit of AS (TrpE) to produce anthranilate. In the absence of TrpG, TrpE can synthesize anthranilate directly from chorismate and high concentrations of ammonia. In addition to synthesizing anthranilate, it also catalyzes the second step of the pathway, the transfer of the phosphoribosyl group of 5-phosphorylribose-1-pyrophosphate (PRPP) to anthranilate.</text>
</comment>
<comment type="catalytic activity">
    <reaction>
        <text>chorismate + L-glutamine = anthranilate + pyruvate + L-glutamate + H(+)</text>
        <dbReference type="Rhea" id="RHEA:21732"/>
        <dbReference type="ChEBI" id="CHEBI:15361"/>
        <dbReference type="ChEBI" id="CHEBI:15378"/>
        <dbReference type="ChEBI" id="CHEBI:16567"/>
        <dbReference type="ChEBI" id="CHEBI:29748"/>
        <dbReference type="ChEBI" id="CHEBI:29985"/>
        <dbReference type="ChEBI" id="CHEBI:58359"/>
        <dbReference type="EC" id="4.1.3.27"/>
    </reaction>
</comment>
<comment type="catalytic activity">
    <reaction>
        <text>N-(5-phospho-beta-D-ribosyl)anthranilate + diphosphate = 5-phospho-alpha-D-ribose 1-diphosphate + anthranilate</text>
        <dbReference type="Rhea" id="RHEA:11768"/>
        <dbReference type="ChEBI" id="CHEBI:16567"/>
        <dbReference type="ChEBI" id="CHEBI:18277"/>
        <dbReference type="ChEBI" id="CHEBI:33019"/>
        <dbReference type="ChEBI" id="CHEBI:58017"/>
        <dbReference type="EC" id="2.4.2.18"/>
    </reaction>
</comment>
<comment type="activity regulation">
    <text evidence="3 4">Cooperatively feedback inhibited by tryptophan.</text>
</comment>
<comment type="pathway">
    <text>Amino-acid biosynthesis; L-tryptophan biosynthesis; L-tryptophan from chorismate: step 1/5.</text>
</comment>
<comment type="pathway">
    <text>Amino-acid biosynthesis; L-tryptophan biosynthesis; L-tryptophan from chorismate: step 2/5.</text>
</comment>
<comment type="subunit">
    <text evidence="6 7 8">Monomer. Heterotetramer consisting of two non-identical subunits: a beta subunit (TrpG) and a large alpha subunit (TrpE) (Probable).</text>
</comment>
<comment type="similarity">
    <text evidence="5">In the C-terminal section; belongs to the anthranilate phosphoribosyltransferase family.</text>
</comment>
<dbReference type="EC" id="4.1.3.27"/>
<dbReference type="EC" id="2.4.2.18"/>
<dbReference type="EMBL" id="AH000942">
    <property type="protein sequence ID" value="AAA27236.1"/>
    <property type="molecule type" value="Genomic_DNA"/>
</dbReference>
<dbReference type="EMBL" id="AE006468">
    <property type="protein sequence ID" value="AAL20642.1"/>
    <property type="molecule type" value="Genomic_DNA"/>
</dbReference>
<dbReference type="EMBL" id="J01811">
    <property type="protein sequence ID" value="AAA57312.1"/>
    <property type="molecule type" value="Genomic_DNA"/>
</dbReference>
<dbReference type="PIR" id="A92907">
    <property type="entry name" value="NNEB2T"/>
</dbReference>
<dbReference type="RefSeq" id="NP_460683.1">
    <property type="nucleotide sequence ID" value="NC_003197.2"/>
</dbReference>
<dbReference type="RefSeq" id="WP_000763494.1">
    <property type="nucleotide sequence ID" value="NC_003197.2"/>
</dbReference>
<dbReference type="PDB" id="1I1Q">
    <property type="method" value="X-ray"/>
    <property type="resolution" value="1.90 A"/>
    <property type="chains" value="B=2-193"/>
</dbReference>
<dbReference type="PDBsum" id="1I1Q"/>
<dbReference type="SMR" id="P00905"/>
<dbReference type="IntAct" id="P00905">
    <property type="interactions" value="1"/>
</dbReference>
<dbReference type="MINT" id="P00905"/>
<dbReference type="STRING" id="99287.STM1724"/>
<dbReference type="MEROPS" id="C26.960"/>
<dbReference type="PaxDb" id="99287-STM1724"/>
<dbReference type="GeneID" id="1253243"/>
<dbReference type="KEGG" id="stm:STM1724"/>
<dbReference type="PATRIC" id="fig|99287.12.peg.1820"/>
<dbReference type="HOGENOM" id="CLU_014340_4_0_6"/>
<dbReference type="PhylomeDB" id="P00905"/>
<dbReference type="BioCyc" id="SENT99287:STM1724-MONOMER"/>
<dbReference type="SABIO-RK" id="P00905"/>
<dbReference type="UniPathway" id="UPA00035">
    <property type="reaction ID" value="UER00040"/>
</dbReference>
<dbReference type="UniPathway" id="UPA00035">
    <property type="reaction ID" value="UER00041"/>
</dbReference>
<dbReference type="EvolutionaryTrace" id="P00905"/>
<dbReference type="Proteomes" id="UP000001014">
    <property type="component" value="Chromosome"/>
</dbReference>
<dbReference type="GO" id="GO:0004048">
    <property type="term" value="F:anthranilate phosphoribosyltransferase activity"/>
    <property type="evidence" value="ECO:0000318"/>
    <property type="project" value="GO_Central"/>
</dbReference>
<dbReference type="GO" id="GO:0004049">
    <property type="term" value="F:anthranilate synthase activity"/>
    <property type="evidence" value="ECO:0007669"/>
    <property type="project" value="UniProtKB-EC"/>
</dbReference>
<dbReference type="GO" id="GO:0000287">
    <property type="term" value="F:magnesium ion binding"/>
    <property type="evidence" value="ECO:0007669"/>
    <property type="project" value="UniProtKB-UniRule"/>
</dbReference>
<dbReference type="GO" id="GO:0000162">
    <property type="term" value="P:L-tryptophan biosynthetic process"/>
    <property type="evidence" value="ECO:0000318"/>
    <property type="project" value="GO_Central"/>
</dbReference>
<dbReference type="GO" id="GO:0002047">
    <property type="term" value="P:phenazine biosynthetic process"/>
    <property type="evidence" value="ECO:0000318"/>
    <property type="project" value="GO_Central"/>
</dbReference>
<dbReference type="CDD" id="cd01743">
    <property type="entry name" value="GATase1_Anthranilate_Synthase"/>
    <property type="match status" value="1"/>
</dbReference>
<dbReference type="FunFam" id="1.20.970.10:FF:000003">
    <property type="entry name" value="Anthranilate phosphoribosyltransferase"/>
    <property type="match status" value="1"/>
</dbReference>
<dbReference type="FunFam" id="3.40.1030.10:FF:000002">
    <property type="entry name" value="Anthranilate phosphoribosyltransferase"/>
    <property type="match status" value="1"/>
</dbReference>
<dbReference type="FunFam" id="3.40.50.880:FF:000021">
    <property type="entry name" value="Anthranilate phosphoribosyltransferase"/>
    <property type="match status" value="1"/>
</dbReference>
<dbReference type="Gene3D" id="3.40.50.880">
    <property type="match status" value="1"/>
</dbReference>
<dbReference type="Gene3D" id="3.40.1030.10">
    <property type="entry name" value="Nucleoside phosphorylase/phosphoribosyltransferase catalytic domain"/>
    <property type="match status" value="1"/>
</dbReference>
<dbReference type="Gene3D" id="1.20.970.10">
    <property type="entry name" value="Transferase, Pyrimidine Nucleoside Phosphorylase, Chain C"/>
    <property type="match status" value="1"/>
</dbReference>
<dbReference type="HAMAP" id="MF_00211">
    <property type="entry name" value="TrpD"/>
    <property type="match status" value="1"/>
</dbReference>
<dbReference type="InterPro" id="IPR005940">
    <property type="entry name" value="Anthranilate_Pribosyl_Tfrase"/>
</dbReference>
<dbReference type="InterPro" id="IPR029062">
    <property type="entry name" value="Class_I_gatase-like"/>
</dbReference>
<dbReference type="InterPro" id="IPR017926">
    <property type="entry name" value="GATASE"/>
</dbReference>
<dbReference type="InterPro" id="IPR000312">
    <property type="entry name" value="Glycosyl_Trfase_fam3"/>
</dbReference>
<dbReference type="InterPro" id="IPR017459">
    <property type="entry name" value="Glycosyl_Trfase_fam3_N_dom"/>
</dbReference>
<dbReference type="InterPro" id="IPR036320">
    <property type="entry name" value="Glycosyl_Trfase_fam3_N_dom_sf"/>
</dbReference>
<dbReference type="InterPro" id="IPR035902">
    <property type="entry name" value="Nuc_phospho_transferase"/>
</dbReference>
<dbReference type="InterPro" id="IPR006221">
    <property type="entry name" value="TrpG/PapA_dom"/>
</dbReference>
<dbReference type="NCBIfam" id="NF007073">
    <property type="entry name" value="PRK09522.1"/>
    <property type="match status" value="1"/>
</dbReference>
<dbReference type="NCBIfam" id="TIGR01245">
    <property type="entry name" value="trpD"/>
    <property type="match status" value="1"/>
</dbReference>
<dbReference type="NCBIfam" id="TIGR00566">
    <property type="entry name" value="trpG_papA"/>
    <property type="match status" value="1"/>
</dbReference>
<dbReference type="PANTHER" id="PTHR43285">
    <property type="entry name" value="ANTHRANILATE PHOSPHORIBOSYLTRANSFERASE"/>
    <property type="match status" value="1"/>
</dbReference>
<dbReference type="PANTHER" id="PTHR43285:SF2">
    <property type="entry name" value="ANTHRANILATE PHOSPHORIBOSYLTRANSFERASE"/>
    <property type="match status" value="1"/>
</dbReference>
<dbReference type="Pfam" id="PF00117">
    <property type="entry name" value="GATase"/>
    <property type="match status" value="1"/>
</dbReference>
<dbReference type="Pfam" id="PF02885">
    <property type="entry name" value="Glycos_trans_3N"/>
    <property type="match status" value="1"/>
</dbReference>
<dbReference type="Pfam" id="PF00591">
    <property type="entry name" value="Glycos_transf_3"/>
    <property type="match status" value="1"/>
</dbReference>
<dbReference type="PRINTS" id="PR00097">
    <property type="entry name" value="ANTSNTHASEII"/>
</dbReference>
<dbReference type="PRINTS" id="PR00099">
    <property type="entry name" value="CPSGATASE"/>
</dbReference>
<dbReference type="PRINTS" id="PR00096">
    <property type="entry name" value="GATASE"/>
</dbReference>
<dbReference type="SUPFAM" id="SSF52317">
    <property type="entry name" value="Class I glutamine amidotransferase-like"/>
    <property type="match status" value="1"/>
</dbReference>
<dbReference type="SUPFAM" id="SSF52418">
    <property type="entry name" value="Nucleoside phosphorylase/phosphoribosyltransferase catalytic domain"/>
    <property type="match status" value="1"/>
</dbReference>
<dbReference type="SUPFAM" id="SSF47648">
    <property type="entry name" value="Nucleoside phosphorylase/phosphoribosyltransferase N-terminal domain"/>
    <property type="match status" value="1"/>
</dbReference>
<dbReference type="PROSITE" id="PS51273">
    <property type="entry name" value="GATASE_TYPE_1"/>
    <property type="match status" value="1"/>
</dbReference>
<feature type="initiator methionine" description="Removed" evidence="1">
    <location>
        <position position="1"/>
    </location>
</feature>
<feature type="chain" id="PRO_0000056897" description="Bifunctional protein TrpGD">
    <location>
        <begin position="2"/>
        <end position="531"/>
    </location>
</feature>
<feature type="domain" description="Glutamine amidotransferase type-1">
    <location>
        <begin position="3"/>
        <end position="196"/>
    </location>
</feature>
<feature type="region of interest" description="Anthranilate phosphoribosyltransferase">
    <location>
        <begin position="202"/>
        <end position="531"/>
    </location>
</feature>
<feature type="active site" description="Nucleophile; for GATase activity" evidence="2">
    <location>
        <position position="84"/>
    </location>
</feature>
<feature type="active site" description="For GATase activity" evidence="1">
    <location>
        <position position="170"/>
    </location>
</feature>
<feature type="active site" description="For GATase activity" evidence="1">
    <location>
        <position position="172"/>
    </location>
</feature>
<feature type="binding site" evidence="2">
    <location>
        <begin position="57"/>
        <end position="59"/>
    </location>
    <ligand>
        <name>L-glutamine</name>
        <dbReference type="ChEBI" id="CHEBI:58359"/>
    </ligand>
</feature>
<feature type="binding site" evidence="2">
    <location>
        <position position="88"/>
    </location>
    <ligand>
        <name>L-glutamine</name>
        <dbReference type="ChEBI" id="CHEBI:58359"/>
    </ligand>
</feature>
<feature type="binding site" evidence="2">
    <location>
        <begin position="134"/>
        <end position="135"/>
    </location>
    <ligand>
        <name>L-glutamine</name>
        <dbReference type="ChEBI" id="CHEBI:58359"/>
    </ligand>
</feature>
<feature type="sequence conflict" description="In Ref. 3; AAA57312." evidence="5" ref="3">
    <original>QQ</original>
    <variation>LA</variation>
    <location>
        <begin position="191"/>
        <end position="192"/>
    </location>
</feature>
<feature type="sequence conflict" description="In Ref. 1; AAA27236." evidence="5" ref="1">
    <original>V</original>
    <variation>L</variation>
    <location>
        <position position="511"/>
    </location>
</feature>
<feature type="strand" evidence="9">
    <location>
        <begin position="3"/>
        <end position="8"/>
    </location>
</feature>
<feature type="helix" evidence="9">
    <location>
        <begin position="14"/>
        <end position="23"/>
    </location>
</feature>
<feature type="strand" evidence="9">
    <location>
        <begin position="27"/>
        <end position="32"/>
    </location>
</feature>
<feature type="helix" evidence="9">
    <location>
        <begin position="38"/>
        <end position="44"/>
    </location>
</feature>
<feature type="strand" evidence="9">
    <location>
        <begin position="48"/>
        <end position="54"/>
    </location>
</feature>
<feature type="helix" evidence="9">
    <location>
        <begin position="61"/>
        <end position="63"/>
    </location>
</feature>
<feature type="helix" evidence="9">
    <location>
        <begin position="67"/>
        <end position="74"/>
    </location>
</feature>
<feature type="strand" evidence="9">
    <location>
        <begin position="80"/>
        <end position="83"/>
    </location>
</feature>
<feature type="helix" evidence="9">
    <location>
        <begin position="85"/>
        <end position="93"/>
    </location>
</feature>
<feature type="strand" evidence="9">
    <location>
        <begin position="106"/>
        <end position="114"/>
    </location>
</feature>
<feature type="helix" evidence="9">
    <location>
        <begin position="118"/>
        <end position="120"/>
    </location>
</feature>
<feature type="strand" evidence="9">
    <location>
        <begin position="125"/>
        <end position="131"/>
    </location>
</feature>
<feature type="strand" evidence="9">
    <location>
        <begin position="145"/>
        <end position="150"/>
    </location>
</feature>
<feature type="strand" evidence="9">
    <location>
        <begin position="153"/>
        <end position="159"/>
    </location>
</feature>
<feature type="turn" evidence="9">
    <location>
        <begin position="160"/>
        <end position="163"/>
    </location>
</feature>
<feature type="strand" evidence="9">
    <location>
        <begin position="164"/>
        <end position="170"/>
    </location>
</feature>
<feature type="helix" evidence="9">
    <location>
        <begin position="179"/>
        <end position="190"/>
    </location>
</feature>
<protein>
    <recommendedName>
        <fullName>Bifunctional protein TrpGD</fullName>
    </recommendedName>
    <domain>
        <recommendedName>
            <fullName>Anthranilate synthase component 2</fullName>
            <shortName>AS</shortName>
            <shortName>ASII</shortName>
            <ecNumber>4.1.3.27</ecNumber>
        </recommendedName>
        <alternativeName>
            <fullName>Anthranilate synthase, glutamine amidotransferase component</fullName>
        </alternativeName>
    </domain>
    <domain>
        <recommendedName>
            <fullName>Anthranilate phosphoribosyltransferase</fullName>
            <ecNumber>2.4.2.18</ecNumber>
        </recommendedName>
    </domain>
</protein>
<organism>
    <name type="scientific">Salmonella typhimurium (strain LT2 / SGSC1412 / ATCC 700720)</name>
    <dbReference type="NCBI Taxonomy" id="99287"/>
    <lineage>
        <taxon>Bacteria</taxon>
        <taxon>Pseudomonadati</taxon>
        <taxon>Pseudomonadota</taxon>
        <taxon>Gammaproteobacteria</taxon>
        <taxon>Enterobacterales</taxon>
        <taxon>Enterobacteriaceae</taxon>
        <taxon>Salmonella</taxon>
    </lineage>
</organism>
<reference key="1">
    <citation type="journal article" date="1983" name="J. Mol. Biol.">
        <title>Nucleotide sequence of the trpD and trpC genes of Salmonella typhimurium.</title>
        <authorList>
            <person name="Horowitz H."/>
            <person name="van Arsdell J."/>
            <person name="Platt T."/>
        </authorList>
    </citation>
    <scope>NUCLEOTIDE SEQUENCE [GENOMIC DNA]</scope>
</reference>
<reference key="2">
    <citation type="journal article" date="2001" name="Nature">
        <title>Complete genome sequence of Salmonella enterica serovar Typhimurium LT2.</title>
        <authorList>
            <person name="McClelland M."/>
            <person name="Sanderson K.E."/>
            <person name="Spieth J."/>
            <person name="Clifton S.W."/>
            <person name="Latreille P."/>
            <person name="Courtney L."/>
            <person name="Porwollik S."/>
            <person name="Ali J."/>
            <person name="Dante M."/>
            <person name="Du F."/>
            <person name="Hou S."/>
            <person name="Layman D."/>
            <person name="Leonard S."/>
            <person name="Nguyen C."/>
            <person name="Scott K."/>
            <person name="Holmes A."/>
            <person name="Grewal N."/>
            <person name="Mulvaney E."/>
            <person name="Ryan E."/>
            <person name="Sun H."/>
            <person name="Florea L."/>
            <person name="Miller W."/>
            <person name="Stoneking T."/>
            <person name="Nhan M."/>
            <person name="Waterston R."/>
            <person name="Wilson R.K."/>
        </authorList>
    </citation>
    <scope>NUCLEOTIDE SEQUENCE [LARGE SCALE GENOMIC DNA]</scope>
    <source>
        <strain>LT2 / SGSC1412 / ATCC 700720</strain>
    </source>
</reference>
<reference key="3">
    <citation type="journal article" date="1980" name="J. Mol. Biol.">
        <title>Nucleotide sequences of the trpG regions of Escherichia coli, Shigella dysenteriae, Salmonella typhimurium and Serratia marcescens.</title>
        <authorList>
            <person name="Nichols B.P."/>
            <person name="Miozzari G.F."/>
            <person name="van Cleemput M."/>
            <person name="Bennett G.N."/>
            <person name="Yanofsky C."/>
        </authorList>
    </citation>
    <scope>NUCLEOTIDE SEQUENCE [GENOMIC DNA] OF 1-201</scope>
</reference>
<reference key="4">
    <citation type="journal article" date="1970" name="J. Biol. Chem.">
        <title>Some physicochemical properties of anthranilate synthetase component I from Salmonella typhimurium.</title>
        <authorList>
            <person name="Nagano H."/>
            <person name="Zalkin H."/>
        </authorList>
    </citation>
    <scope>FUNCTION</scope>
    <scope>ACTIVITY REGULATION</scope>
    <scope>SUBUNIT</scope>
</reference>
<reference key="5">
    <citation type="journal article" date="1991" name="J. Biol. Chem.">
        <title>Identification of amino acid residues involved in feedback regulation of the anthranilate synthase complex from Salmonella typhimurium. Evidence for an amino-terminal regulatory site.</title>
        <authorList>
            <person name="Caligiuri M.G."/>
            <person name="Bauerle R."/>
        </authorList>
    </citation>
    <scope>ACTIVITY REGULATION</scope>
</reference>
<reference key="6">
    <citation type="journal article" date="1999" name="Acta Crystallogr. D">
        <title>Crystallization and preliminary crystallographic studies of the anthranilate synthase partial complex from Salmonella typhimurium.</title>
        <authorList>
            <person name="Tolbert W.D."/>
            <person name="Chatterji S."/>
            <person name="Bauerle R."/>
            <person name="Kretsinger R."/>
        </authorList>
    </citation>
    <scope>CRYSTALLIZATION</scope>
    <scope>SUBUNIT</scope>
</reference>
<reference key="7">
    <citation type="journal article" date="2001" name="Nat. Struct. Biol.">
        <title>Structure of the cooperative allosteric anthranilate synthase from Salmonella typhimurium.</title>
        <authorList>
            <person name="Morollo A.A."/>
            <person name="Eck M.J."/>
        </authorList>
    </citation>
    <scope>X-RAY CRYSTALLOGRAPHY (1.9 ANGSTROMS)</scope>
    <scope>SUBUNIT</scope>
</reference>
<gene>
    <name type="primary">trpGD</name>
    <name type="synonym">trpD</name>
    <name type="ordered locus">STM1724</name>
</gene>